<feature type="chain" id="PRO_0000170410" description="Nucleoid-associated protein MYPU_0500">
    <location>
        <begin position="1"/>
        <end position="100"/>
    </location>
</feature>
<keyword id="KW-0963">Cytoplasm</keyword>
<keyword id="KW-0238">DNA-binding</keyword>
<keyword id="KW-1185">Reference proteome</keyword>
<accession>Q98RF9</accession>
<gene>
    <name type="ordered locus">MYPU_0500</name>
</gene>
<organism>
    <name type="scientific">Mycoplasmopsis pulmonis (strain UAB CTIP)</name>
    <name type="common">Mycoplasma pulmonis</name>
    <dbReference type="NCBI Taxonomy" id="272635"/>
    <lineage>
        <taxon>Bacteria</taxon>
        <taxon>Bacillati</taxon>
        <taxon>Mycoplasmatota</taxon>
        <taxon>Mycoplasmoidales</taxon>
        <taxon>Metamycoplasmataceae</taxon>
        <taxon>Mycoplasmopsis</taxon>
    </lineage>
</organism>
<evidence type="ECO:0000255" key="1">
    <source>
        <dbReference type="HAMAP-Rule" id="MF_00274"/>
    </source>
</evidence>
<name>Y050_MYCPU</name>
<dbReference type="EMBL" id="AL445563">
    <property type="protein sequence ID" value="CAC13223.1"/>
    <property type="molecule type" value="Genomic_DNA"/>
</dbReference>
<dbReference type="PIR" id="B90518">
    <property type="entry name" value="B90518"/>
</dbReference>
<dbReference type="SMR" id="Q98RF9"/>
<dbReference type="STRING" id="272635.gene:17576629"/>
<dbReference type="KEGG" id="mpu:MYPU_0500"/>
<dbReference type="eggNOG" id="COG0718">
    <property type="taxonomic scope" value="Bacteria"/>
</dbReference>
<dbReference type="HOGENOM" id="CLU_140930_1_2_14"/>
<dbReference type="Proteomes" id="UP000000528">
    <property type="component" value="Chromosome"/>
</dbReference>
<dbReference type="GO" id="GO:0043590">
    <property type="term" value="C:bacterial nucleoid"/>
    <property type="evidence" value="ECO:0007669"/>
    <property type="project" value="UniProtKB-UniRule"/>
</dbReference>
<dbReference type="GO" id="GO:0005829">
    <property type="term" value="C:cytosol"/>
    <property type="evidence" value="ECO:0007669"/>
    <property type="project" value="TreeGrafter"/>
</dbReference>
<dbReference type="GO" id="GO:0003677">
    <property type="term" value="F:DNA binding"/>
    <property type="evidence" value="ECO:0007669"/>
    <property type="project" value="UniProtKB-UniRule"/>
</dbReference>
<dbReference type="Gene3D" id="3.30.1310.10">
    <property type="entry name" value="Nucleoid-associated protein YbaB-like domain"/>
    <property type="match status" value="1"/>
</dbReference>
<dbReference type="HAMAP" id="MF_00274">
    <property type="entry name" value="DNA_YbaB_EbfC"/>
    <property type="match status" value="1"/>
</dbReference>
<dbReference type="InterPro" id="IPR036894">
    <property type="entry name" value="YbaB-like_sf"/>
</dbReference>
<dbReference type="InterPro" id="IPR004401">
    <property type="entry name" value="YbaB/EbfC"/>
</dbReference>
<dbReference type="NCBIfam" id="TIGR00103">
    <property type="entry name" value="DNA_YbaB_EbfC"/>
    <property type="match status" value="1"/>
</dbReference>
<dbReference type="PANTHER" id="PTHR33449">
    <property type="entry name" value="NUCLEOID-ASSOCIATED PROTEIN YBAB"/>
    <property type="match status" value="1"/>
</dbReference>
<dbReference type="PANTHER" id="PTHR33449:SF1">
    <property type="entry name" value="NUCLEOID-ASSOCIATED PROTEIN YBAB"/>
    <property type="match status" value="1"/>
</dbReference>
<dbReference type="Pfam" id="PF02575">
    <property type="entry name" value="YbaB_DNA_bd"/>
    <property type="match status" value="1"/>
</dbReference>
<dbReference type="PIRSF" id="PIRSF004555">
    <property type="entry name" value="UCP004555"/>
    <property type="match status" value="1"/>
</dbReference>
<dbReference type="SUPFAM" id="SSF82607">
    <property type="entry name" value="YbaB-like"/>
    <property type="match status" value="1"/>
</dbReference>
<reference key="1">
    <citation type="journal article" date="2001" name="Nucleic Acids Res.">
        <title>The complete genome sequence of the murine respiratory pathogen Mycoplasma pulmonis.</title>
        <authorList>
            <person name="Chambaud I."/>
            <person name="Heilig R."/>
            <person name="Ferris S."/>
            <person name="Barbe V."/>
            <person name="Samson D."/>
            <person name="Galisson F."/>
            <person name="Moszer I."/>
            <person name="Dybvig K."/>
            <person name="Wroblewski H."/>
            <person name="Viari A."/>
            <person name="Rocha E.P.C."/>
            <person name="Blanchard A."/>
        </authorList>
    </citation>
    <scope>NUCLEOTIDE SEQUENCE [LARGE SCALE GENOMIC DNA]</scope>
    <source>
        <strain>UAB CTIP</strain>
    </source>
</reference>
<comment type="function">
    <text evidence="1">Binds to DNA and alters its conformation. May be involved in regulation of gene expression, nucleoid organization and DNA protection.</text>
</comment>
<comment type="subunit">
    <text evidence="1">Homodimer.</text>
</comment>
<comment type="subcellular location">
    <subcellularLocation>
        <location evidence="1">Cytoplasm</location>
        <location evidence="1">Nucleoid</location>
    </subcellularLocation>
</comment>
<comment type="similarity">
    <text evidence="1">Belongs to the YbaB/EbfC family.</text>
</comment>
<proteinExistence type="inferred from homology"/>
<protein>
    <recommendedName>
        <fullName evidence="1">Nucleoid-associated protein MYPU_0500</fullName>
    </recommendedName>
</protein>
<sequence>MNNMNINEMLKQAKKMQSEIELKEKELYKKEFTIEKQGLTLVLNGKREVLKIDINEALVDPEDKDILEDLLLLAFNEAMEKIDEAHKEIEKQIPSGKLPF</sequence>